<sequence length="287" mass="32915">MNIQEYFSRISFDGSHKDADLQTLTAIFQHHIQAIPFENLSMHCGETIDLDLQATYNKIVKKKRGGWCMETNYLLFWALKEMGYDICVLGGNSYEPAKKAYTDEINHILLKVVIKGSSYIVDAGFGGGPYQTWLPMLLISGKDQPQIPGIFRFIEDNGIWYLEKVKRKHYVPEGSVPLTDNPEMGNIRKLYSFTLEPKHIDDFQELNAYLQVAPDTILQKKSICSLQTTDGFYALVGWTFSEMKYKYKEDADLLQTTTLTDEEVEKTLKDKFNIVLENKLIPVNVRG</sequence>
<reference key="1">
    <citation type="journal article" date="1988" name="J. Biol. Chem.">
        <title>Arylamine N-acetyltransferase from chicken liver II. Cloning of cDNA and expression in Chinese hamster ovary cells.</title>
        <authorList>
            <person name="Ohsako S."/>
            <person name="Ohtomi M."/>
            <person name="Sakamoto Y."/>
            <person name="Uyemura K."/>
            <person name="Deguchi T."/>
        </authorList>
    </citation>
    <scope>NUCLEOTIDE SEQUENCE [MRNA]</scope>
    <source>
        <tissue>Liver</tissue>
    </source>
</reference>
<reference key="2">
    <citation type="journal article" date="1988" name="J. Biol. Chem.">
        <title>Arylamine N-acetyltransferase from chicken liver. I. Monoclonal antibodies, immunoaffinity purification, and amino acid sequences.</title>
        <authorList>
            <person name="Deguchi T."/>
            <person name="Sakamoto Y."/>
            <person name="Sasaki Y."/>
            <person name="Uyemura K."/>
        </authorList>
    </citation>
    <scope>PARTIAL PROTEIN SEQUENCE</scope>
</reference>
<keyword id="KW-0012">Acyltransferase</keyword>
<keyword id="KW-0903">Direct protein sequencing</keyword>
<keyword id="KW-1185">Reference proteome</keyword>
<keyword id="KW-0808">Transferase</keyword>
<protein>
    <recommendedName>
        <fullName>Arylamine N-acetyltransferase, liver isozyme</fullName>
        <shortName>Arylamine acetylase</shortName>
        <ecNumber>2.3.1.5</ecNumber>
    </recommendedName>
</protein>
<feature type="chain" id="PRO_0000107900" description="Arylamine N-acetyltransferase, liver isozyme">
    <location>
        <begin position="1"/>
        <end position="287"/>
    </location>
</feature>
<feature type="active site" description="Acyl-thioester intermediate" evidence="1">
    <location>
        <position position="68"/>
    </location>
</feature>
<feature type="active site" evidence="1">
    <location>
        <position position="107"/>
    </location>
</feature>
<feature type="active site" evidence="1">
    <location>
        <position position="122"/>
    </location>
</feature>
<accession>P12275</accession>
<organism>
    <name type="scientific">Gallus gallus</name>
    <name type="common">Chicken</name>
    <dbReference type="NCBI Taxonomy" id="9031"/>
    <lineage>
        <taxon>Eukaryota</taxon>
        <taxon>Metazoa</taxon>
        <taxon>Chordata</taxon>
        <taxon>Craniata</taxon>
        <taxon>Vertebrata</taxon>
        <taxon>Euteleostomi</taxon>
        <taxon>Archelosauria</taxon>
        <taxon>Archosauria</taxon>
        <taxon>Dinosauria</taxon>
        <taxon>Saurischia</taxon>
        <taxon>Theropoda</taxon>
        <taxon>Coelurosauria</taxon>
        <taxon>Aves</taxon>
        <taxon>Neognathae</taxon>
        <taxon>Galloanserae</taxon>
        <taxon>Galliformes</taxon>
        <taxon>Phasianidae</taxon>
        <taxon>Phasianinae</taxon>
        <taxon>Gallus</taxon>
    </lineage>
</organism>
<name>ARYL_CHICK</name>
<evidence type="ECO:0000250" key="1"/>
<evidence type="ECO:0000305" key="2"/>
<comment type="catalytic activity">
    <reaction>
        <text>an arylamine + acetyl-CoA = an N-acetylarylamine + CoA</text>
        <dbReference type="Rhea" id="RHEA:16613"/>
        <dbReference type="ChEBI" id="CHEBI:13790"/>
        <dbReference type="ChEBI" id="CHEBI:50471"/>
        <dbReference type="ChEBI" id="CHEBI:57287"/>
        <dbReference type="ChEBI" id="CHEBI:57288"/>
        <dbReference type="EC" id="2.3.1.5"/>
    </reaction>
</comment>
<comment type="similarity">
    <text evidence="2">Belongs to the arylamine N-acetyltransferase family.</text>
</comment>
<dbReference type="EC" id="2.3.1.5"/>
<dbReference type="EMBL" id="J03737">
    <property type="protein sequence ID" value="AAA48590.1"/>
    <property type="molecule type" value="mRNA"/>
</dbReference>
<dbReference type="PIR" id="A28168">
    <property type="entry name" value="A28168"/>
</dbReference>
<dbReference type="RefSeq" id="NP_990857.2">
    <property type="nucleotide sequence ID" value="NM_205526.2"/>
</dbReference>
<dbReference type="SMR" id="P12275"/>
<dbReference type="FunCoup" id="P12275">
    <property type="interactions" value="26"/>
</dbReference>
<dbReference type="STRING" id="9031.ENSGALP00000008778"/>
<dbReference type="PaxDb" id="9031-ENSGALP00000008778"/>
<dbReference type="GeneID" id="396537"/>
<dbReference type="KEGG" id="gga:396537"/>
<dbReference type="CTD" id="396537"/>
<dbReference type="VEuPathDB" id="HostDB:geneid_396537"/>
<dbReference type="eggNOG" id="ENOG502RVZB">
    <property type="taxonomic scope" value="Eukaryota"/>
</dbReference>
<dbReference type="InParanoid" id="P12275"/>
<dbReference type="OrthoDB" id="10260017at2759"/>
<dbReference type="PhylomeDB" id="P12275"/>
<dbReference type="PRO" id="PR:P12275"/>
<dbReference type="Proteomes" id="UP000000539">
    <property type="component" value="Unassembled WGS sequence"/>
</dbReference>
<dbReference type="GO" id="GO:0004060">
    <property type="term" value="F:arylamine N-acetyltransferase activity"/>
    <property type="evidence" value="ECO:0000318"/>
    <property type="project" value="GO_Central"/>
</dbReference>
<dbReference type="FunFam" id="3.30.2140.20:FF:000001">
    <property type="entry name" value="Arylamine N-acetyltransferase 1"/>
    <property type="match status" value="1"/>
</dbReference>
<dbReference type="Gene3D" id="3.30.2140.20">
    <property type="match status" value="1"/>
</dbReference>
<dbReference type="InterPro" id="IPR001447">
    <property type="entry name" value="Arylamine_N-AcTrfase"/>
</dbReference>
<dbReference type="InterPro" id="IPR053710">
    <property type="entry name" value="Arylamine_NAT_domain_sf"/>
</dbReference>
<dbReference type="InterPro" id="IPR038765">
    <property type="entry name" value="Papain-like_cys_pep_sf"/>
</dbReference>
<dbReference type="PANTHER" id="PTHR11786:SF8">
    <property type="entry name" value="ARYLAMINE N-ACETYLTRANSFERASE 1"/>
    <property type="match status" value="1"/>
</dbReference>
<dbReference type="PANTHER" id="PTHR11786">
    <property type="entry name" value="N-HYDROXYARYLAMINE O-ACETYLTRANSFERASE"/>
    <property type="match status" value="1"/>
</dbReference>
<dbReference type="Pfam" id="PF00797">
    <property type="entry name" value="Acetyltransf_2"/>
    <property type="match status" value="1"/>
</dbReference>
<dbReference type="PRINTS" id="PR01543">
    <property type="entry name" value="ANATRNSFRASE"/>
</dbReference>
<dbReference type="SUPFAM" id="SSF54001">
    <property type="entry name" value="Cysteine proteinases"/>
    <property type="match status" value="1"/>
</dbReference>
<proteinExistence type="evidence at protein level"/>